<keyword id="KW-0002">3D-structure</keyword>
<keyword id="KW-0007">Acetylation</keyword>
<keyword id="KW-0025">Alternative splicing</keyword>
<keyword id="KW-0968">Cytoplasmic vesicle</keyword>
<keyword id="KW-0903">Direct protein sequencing</keyword>
<keyword id="KW-0256">Endoplasmic reticulum</keyword>
<keyword id="KW-0931">ER-Golgi transport</keyword>
<keyword id="KW-0458">Lysosome</keyword>
<keyword id="KW-0472">Membrane</keyword>
<keyword id="KW-0509">mRNA transport</keyword>
<keyword id="KW-0906">Nuclear pore complex</keyword>
<keyword id="KW-0539">Nucleus</keyword>
<keyword id="KW-0597">Phosphoprotein</keyword>
<keyword id="KW-0653">Protein transport</keyword>
<keyword id="KW-1267">Proteomics identification</keyword>
<keyword id="KW-1185">Reference proteome</keyword>
<keyword id="KW-0677">Repeat</keyword>
<keyword id="KW-0811">Translocation</keyword>
<keyword id="KW-0813">Transport</keyword>
<keyword id="KW-0853">WD repeat</keyword>
<dbReference type="EMBL" id="L09260">
    <property type="status" value="NOT_ANNOTATED_CDS"/>
    <property type="molecule type" value="mRNA"/>
</dbReference>
<dbReference type="EMBL" id="AF052155">
    <property type="status" value="NOT_ANNOTATED_CDS"/>
    <property type="molecule type" value="mRNA"/>
</dbReference>
<dbReference type="EMBL" id="AK301999">
    <property type="protein sequence ID" value="BAG63403.1"/>
    <property type="molecule type" value="mRNA"/>
</dbReference>
<dbReference type="EMBL" id="AC022384">
    <property type="status" value="NOT_ANNOTATED_CDS"/>
    <property type="molecule type" value="Genomic_DNA"/>
</dbReference>
<dbReference type="EMBL" id="BC002634">
    <property type="protein sequence ID" value="AAH02634.2"/>
    <property type="molecule type" value="mRNA"/>
</dbReference>
<dbReference type="EMBL" id="BC006167">
    <property type="protein sequence ID" value="AAH06167.1"/>
    <property type="molecule type" value="mRNA"/>
</dbReference>
<dbReference type="EMBL" id="BC091506">
    <property type="protein sequence ID" value="AAH91506.1"/>
    <property type="molecule type" value="mRNA"/>
</dbReference>
<dbReference type="CCDS" id="CCDS2599.1">
    <molecule id="P55735-1"/>
</dbReference>
<dbReference type="CCDS" id="CCDS46751.1">
    <molecule id="P55735-2"/>
</dbReference>
<dbReference type="CCDS" id="CCDS63540.1">
    <molecule id="P55735-3"/>
</dbReference>
<dbReference type="RefSeq" id="NP_001129498.1">
    <molecule id="P55735-3"/>
    <property type="nucleotide sequence ID" value="NM_001136026.3"/>
</dbReference>
<dbReference type="RefSeq" id="NP_001129704.1">
    <molecule id="P55735-2"/>
    <property type="nucleotide sequence ID" value="NM_001136232.3"/>
</dbReference>
<dbReference type="RefSeq" id="NP_109598.2">
    <molecule id="P55735-4"/>
    <property type="nucleotide sequence ID" value="NM_030673.3"/>
</dbReference>
<dbReference type="RefSeq" id="NP_899195.1">
    <molecule id="P55735-1"/>
    <property type="nucleotide sequence ID" value="NM_183352.3"/>
</dbReference>
<dbReference type="RefSeq" id="XP_005265436.1">
    <property type="nucleotide sequence ID" value="XM_005265379.2"/>
</dbReference>
<dbReference type="RefSeq" id="XP_016862508.1">
    <property type="nucleotide sequence ID" value="XM_017007019.1"/>
</dbReference>
<dbReference type="RefSeq" id="XP_047304643.1">
    <molecule id="P55735-3"/>
    <property type="nucleotide sequence ID" value="XM_047448687.1"/>
</dbReference>
<dbReference type="RefSeq" id="XP_047304644.1">
    <molecule id="P55735-3"/>
    <property type="nucleotide sequence ID" value="XM_047448688.1"/>
</dbReference>
<dbReference type="RefSeq" id="XP_047304648.1">
    <molecule id="P55735-4"/>
    <property type="nucleotide sequence ID" value="XM_047448692.1"/>
</dbReference>
<dbReference type="RefSeq" id="XP_047304649.1">
    <molecule id="P55735-4"/>
    <property type="nucleotide sequence ID" value="XM_047448693.1"/>
</dbReference>
<dbReference type="RefSeq" id="XP_047304650.1">
    <molecule id="P55735-2"/>
    <property type="nucleotide sequence ID" value="XM_047448694.1"/>
</dbReference>
<dbReference type="RefSeq" id="XP_047304651.1">
    <molecule id="P55735-2"/>
    <property type="nucleotide sequence ID" value="XM_047448695.1"/>
</dbReference>
<dbReference type="RefSeq" id="XP_054203466.1">
    <molecule id="P55735-3"/>
    <property type="nucleotide sequence ID" value="XM_054347491.1"/>
</dbReference>
<dbReference type="RefSeq" id="XP_054203467.1">
    <molecule id="P55735-3"/>
    <property type="nucleotide sequence ID" value="XM_054347492.1"/>
</dbReference>
<dbReference type="RefSeq" id="XP_054203471.1">
    <molecule id="P55735-4"/>
    <property type="nucleotide sequence ID" value="XM_054347496.1"/>
</dbReference>
<dbReference type="RefSeq" id="XP_054203472.1">
    <molecule id="P55735-4"/>
    <property type="nucleotide sequence ID" value="XM_054347497.1"/>
</dbReference>
<dbReference type="RefSeq" id="XP_054203473.1">
    <molecule id="P55735-2"/>
    <property type="nucleotide sequence ID" value="XM_054347498.1"/>
</dbReference>
<dbReference type="RefSeq" id="XP_054203474.1">
    <molecule id="P55735-2"/>
    <property type="nucleotide sequence ID" value="XM_054347499.1"/>
</dbReference>
<dbReference type="PDB" id="3BG0">
    <property type="method" value="X-ray"/>
    <property type="resolution" value="3.15 A"/>
    <property type="chains" value="A/D/E/H=1-316"/>
</dbReference>
<dbReference type="PDB" id="3BG1">
    <property type="method" value="X-ray"/>
    <property type="resolution" value="3.00 A"/>
    <property type="chains" value="A/D/E/H=1-316"/>
</dbReference>
<dbReference type="PDB" id="5A9Q">
    <property type="method" value="EM"/>
    <property type="resolution" value="23.00 A"/>
    <property type="chains" value="6/F/O/X=1-322"/>
</dbReference>
<dbReference type="PDB" id="7PEQ">
    <property type="method" value="EM"/>
    <property type="resolution" value="35.00 A"/>
    <property type="chains" value="AF/BF/CF/DF=1-322"/>
</dbReference>
<dbReference type="PDB" id="7R5J">
    <property type="method" value="EM"/>
    <property type="resolution" value="50.00 A"/>
    <property type="chains" value="N0/N1/N2/N3=1-322"/>
</dbReference>
<dbReference type="PDB" id="7R5K">
    <property type="method" value="EM"/>
    <property type="resolution" value="12.00 A"/>
    <property type="chains" value="N0/N1/N2/N3=1-322"/>
</dbReference>
<dbReference type="PDB" id="7UHY">
    <property type="method" value="EM"/>
    <property type="resolution" value="3.66 A"/>
    <property type="chains" value="H=1-322"/>
</dbReference>
<dbReference type="PDBsum" id="3BG0"/>
<dbReference type="PDBsum" id="3BG1"/>
<dbReference type="PDBsum" id="5A9Q"/>
<dbReference type="PDBsum" id="7PEQ"/>
<dbReference type="PDBsum" id="7R5J"/>
<dbReference type="PDBsum" id="7R5K"/>
<dbReference type="PDBsum" id="7UHY"/>
<dbReference type="EMDB" id="EMD-14321"/>
<dbReference type="EMDB" id="EMD-14322"/>
<dbReference type="EMDB" id="EMD-26519"/>
<dbReference type="SMR" id="P55735"/>
<dbReference type="BioGRID" id="112296">
    <property type="interactions" value="212"/>
</dbReference>
<dbReference type="ComplexPortal" id="CPX-2360">
    <property type="entry name" value="COPII vesicle coat complex"/>
</dbReference>
<dbReference type="ComplexPortal" id="CPX-6227">
    <property type="entry name" value="GATOR2 complex"/>
</dbReference>
<dbReference type="ComplexPortal" id="CPX-873">
    <property type="entry name" value="Nuclear pore complex"/>
</dbReference>
<dbReference type="CORUM" id="P55735"/>
<dbReference type="DIP" id="DIP-39091N"/>
<dbReference type="FunCoup" id="P55735">
    <property type="interactions" value="3407"/>
</dbReference>
<dbReference type="IntAct" id="P55735">
    <property type="interactions" value="133"/>
</dbReference>
<dbReference type="MINT" id="P55735"/>
<dbReference type="STRING" id="9606.ENSP00000373312"/>
<dbReference type="TCDB" id="1.I.1.1.3">
    <property type="family name" value="the nuclear pore complex (npc) family"/>
</dbReference>
<dbReference type="GlyGen" id="P55735">
    <property type="glycosylation" value="1 site, 1 O-linked glycan (1 site)"/>
</dbReference>
<dbReference type="iPTMnet" id="P55735"/>
<dbReference type="PhosphoSitePlus" id="P55735"/>
<dbReference type="SwissPalm" id="P55735"/>
<dbReference type="BioMuta" id="SEC13"/>
<dbReference type="DMDM" id="50403748"/>
<dbReference type="jPOST" id="P55735"/>
<dbReference type="MassIVE" id="P55735"/>
<dbReference type="PaxDb" id="9606-ENSP00000373312"/>
<dbReference type="PeptideAtlas" id="P55735"/>
<dbReference type="ProteomicsDB" id="2150"/>
<dbReference type="ProteomicsDB" id="56858">
    <molecule id="P55735-1"/>
</dbReference>
<dbReference type="Pumba" id="P55735"/>
<dbReference type="Antibodypedia" id="25962">
    <property type="antibodies" value="245 antibodies from 35 providers"/>
</dbReference>
<dbReference type="DNASU" id="6396"/>
<dbReference type="Ensembl" id="ENST00000337354.8">
    <molecule id="P55735-4"/>
    <property type="protein sequence ID" value="ENSP00000336566.4"/>
    <property type="gene ID" value="ENSG00000157020.18"/>
</dbReference>
<dbReference type="Ensembl" id="ENST00000350697.8">
    <molecule id="P55735-1"/>
    <property type="protein sequence ID" value="ENSP00000312122.4"/>
    <property type="gene ID" value="ENSG00000157020.18"/>
</dbReference>
<dbReference type="Ensembl" id="ENST00000383801.6">
    <molecule id="P55735-3"/>
    <property type="protein sequence ID" value="ENSP00000373312.2"/>
    <property type="gene ID" value="ENSG00000157020.18"/>
</dbReference>
<dbReference type="Ensembl" id="ENST00000397109.7">
    <molecule id="P55735-2"/>
    <property type="protein sequence ID" value="ENSP00000380298.3"/>
    <property type="gene ID" value="ENSG00000157020.18"/>
</dbReference>
<dbReference type="GeneID" id="6396"/>
<dbReference type="KEGG" id="hsa:6396"/>
<dbReference type="MANE-Select" id="ENST00000350697.8">
    <property type="protein sequence ID" value="ENSP00000312122.4"/>
    <property type="RefSeq nucleotide sequence ID" value="NM_183352.3"/>
    <property type="RefSeq protein sequence ID" value="NP_899195.1"/>
</dbReference>
<dbReference type="UCSC" id="uc003bvm.5">
    <molecule id="P55735-1"/>
    <property type="organism name" value="human"/>
</dbReference>
<dbReference type="AGR" id="HGNC:10697"/>
<dbReference type="CTD" id="6396"/>
<dbReference type="DisGeNET" id="6396"/>
<dbReference type="GeneCards" id="SEC13"/>
<dbReference type="HGNC" id="HGNC:10697">
    <property type="gene designation" value="SEC13"/>
</dbReference>
<dbReference type="HPA" id="ENSG00000157020">
    <property type="expression patterns" value="Low tissue specificity"/>
</dbReference>
<dbReference type="MIM" id="600152">
    <property type="type" value="gene"/>
</dbReference>
<dbReference type="neXtProt" id="NX_P55735"/>
<dbReference type="OpenTargets" id="ENSG00000157020"/>
<dbReference type="PharmGKB" id="PA35620"/>
<dbReference type="VEuPathDB" id="HostDB:ENSG00000157020"/>
<dbReference type="eggNOG" id="KOG1332">
    <property type="taxonomic scope" value="Eukaryota"/>
</dbReference>
<dbReference type="GeneTree" id="ENSGT00940000153393"/>
<dbReference type="HOGENOM" id="CLU_032441_0_1_1"/>
<dbReference type="InParanoid" id="P55735"/>
<dbReference type="OrthoDB" id="364224at2759"/>
<dbReference type="PAN-GO" id="P55735">
    <property type="GO annotations" value="7 GO annotations based on evolutionary models"/>
</dbReference>
<dbReference type="PhylomeDB" id="P55735"/>
<dbReference type="TreeFam" id="TF300815"/>
<dbReference type="PathwayCommons" id="P55735"/>
<dbReference type="Reactome" id="R-HSA-1169408">
    <property type="pathway name" value="ISG15 antiviral mechanism"/>
</dbReference>
<dbReference type="Reactome" id="R-HSA-141444">
    <property type="pathway name" value="Amplification of signal from unattached kinetochores via a MAD2 inhibitory signal"/>
</dbReference>
<dbReference type="Reactome" id="R-HSA-159227">
    <property type="pathway name" value="Transport of the SLBP independent Mature mRNA"/>
</dbReference>
<dbReference type="Reactome" id="R-HSA-159230">
    <property type="pathway name" value="Transport of the SLBP Dependant Mature mRNA"/>
</dbReference>
<dbReference type="Reactome" id="R-HSA-159231">
    <property type="pathway name" value="Transport of Mature mRNA Derived from an Intronless Transcript"/>
</dbReference>
<dbReference type="Reactome" id="R-HSA-159236">
    <property type="pathway name" value="Transport of Mature mRNA derived from an Intron-Containing Transcript"/>
</dbReference>
<dbReference type="Reactome" id="R-HSA-165054">
    <property type="pathway name" value="Rev-mediated nuclear export of HIV RNA"/>
</dbReference>
<dbReference type="Reactome" id="R-HSA-168271">
    <property type="pathway name" value="Transport of Ribonucleoproteins into the Host Nucleus"/>
</dbReference>
<dbReference type="Reactome" id="R-HSA-168276">
    <property type="pathway name" value="NS1 Mediated Effects on Host Pathways"/>
</dbReference>
<dbReference type="Reactome" id="R-HSA-168325">
    <property type="pathway name" value="Viral Messenger RNA Synthesis"/>
</dbReference>
<dbReference type="Reactome" id="R-HSA-168333">
    <property type="pathway name" value="NEP/NS2 Interacts with the Cellular Export Machinery"/>
</dbReference>
<dbReference type="Reactome" id="R-HSA-170822">
    <property type="pathway name" value="Regulation of Glucokinase by Glucokinase Regulatory Protein"/>
</dbReference>
<dbReference type="Reactome" id="R-HSA-180746">
    <property type="pathway name" value="Nuclear import of Rev protein"/>
</dbReference>
<dbReference type="Reactome" id="R-HSA-180910">
    <property type="pathway name" value="Vpr-mediated nuclear import of PICs"/>
</dbReference>
<dbReference type="Reactome" id="R-HSA-191859">
    <property type="pathway name" value="snRNP Assembly"/>
</dbReference>
<dbReference type="Reactome" id="R-HSA-204005">
    <property type="pathway name" value="COPII-mediated vesicle transport"/>
</dbReference>
<dbReference type="Reactome" id="R-HSA-2132295">
    <property type="pathway name" value="MHC class II antigen presentation"/>
</dbReference>
<dbReference type="Reactome" id="R-HSA-2467813">
    <property type="pathway name" value="Separation of Sister Chromatids"/>
</dbReference>
<dbReference type="Reactome" id="R-HSA-2500257">
    <property type="pathway name" value="Resolution of Sister Chromatid Cohesion"/>
</dbReference>
<dbReference type="Reactome" id="R-HSA-3108214">
    <property type="pathway name" value="SUMOylation of DNA damage response and repair proteins"/>
</dbReference>
<dbReference type="Reactome" id="R-HSA-3232142">
    <property type="pathway name" value="SUMOylation of ubiquitinylation proteins"/>
</dbReference>
<dbReference type="Reactome" id="R-HSA-3301854">
    <property type="pathway name" value="Nuclear Pore Complex (NPC) Disassembly"/>
</dbReference>
<dbReference type="Reactome" id="R-HSA-3371453">
    <property type="pathway name" value="Regulation of HSF1-mediated heat shock response"/>
</dbReference>
<dbReference type="Reactome" id="R-HSA-4085377">
    <property type="pathway name" value="SUMOylation of SUMOylation proteins"/>
</dbReference>
<dbReference type="Reactome" id="R-HSA-4551638">
    <property type="pathway name" value="SUMOylation of chromatin organization proteins"/>
</dbReference>
<dbReference type="Reactome" id="R-HSA-4570464">
    <property type="pathway name" value="SUMOylation of RNA binding proteins"/>
</dbReference>
<dbReference type="Reactome" id="R-HSA-4615885">
    <property type="pathway name" value="SUMOylation of DNA replication proteins"/>
</dbReference>
<dbReference type="Reactome" id="R-HSA-5578749">
    <property type="pathway name" value="Transcriptional regulation by small RNAs"/>
</dbReference>
<dbReference type="Reactome" id="R-HSA-5619107">
    <property type="pathway name" value="Defective TPR may confer susceptibility towards thyroid papillary carcinoma (TPC)"/>
</dbReference>
<dbReference type="Reactome" id="R-HSA-5663220">
    <property type="pathway name" value="RHO GTPases Activate Formins"/>
</dbReference>
<dbReference type="Reactome" id="R-HSA-6784531">
    <property type="pathway name" value="tRNA processing in the nucleus"/>
</dbReference>
<dbReference type="Reactome" id="R-HSA-68877">
    <property type="pathway name" value="Mitotic Prometaphase"/>
</dbReference>
<dbReference type="Reactome" id="R-HSA-9609690">
    <property type="pathway name" value="HCMV Early Events"/>
</dbReference>
<dbReference type="Reactome" id="R-HSA-9610379">
    <property type="pathway name" value="HCMV Late Events"/>
</dbReference>
<dbReference type="Reactome" id="R-HSA-9615933">
    <property type="pathway name" value="Postmitotic nuclear pore complex (NPC) reformation"/>
</dbReference>
<dbReference type="Reactome" id="R-HSA-9639288">
    <property type="pathway name" value="Amino acids regulate mTORC1"/>
</dbReference>
<dbReference type="Reactome" id="R-HSA-9648025">
    <property type="pathway name" value="EML4 and NUDC in mitotic spindle formation"/>
</dbReference>
<dbReference type="Reactome" id="R-HSA-9705671">
    <property type="pathway name" value="SARS-CoV-2 activates/modulates innate and adaptive immune responses"/>
</dbReference>
<dbReference type="Reactome" id="R-HSA-983170">
    <property type="pathway name" value="Antigen Presentation: Folding, assembly and peptide loading of class I MHC"/>
</dbReference>
<dbReference type="SignaLink" id="P55735"/>
<dbReference type="SIGNOR" id="P55735"/>
<dbReference type="BioGRID-ORCS" id="6396">
    <property type="hits" value="804 hits in 1139 CRISPR screens"/>
</dbReference>
<dbReference type="CD-CODE" id="1EF72FBA">
    <property type="entry name" value="ERES"/>
</dbReference>
<dbReference type="CD-CODE" id="8DB3D246">
    <property type="entry name" value="SCOTIN condensate"/>
</dbReference>
<dbReference type="CD-CODE" id="D6A53B8E">
    <property type="entry name" value="Nuclear pore complex"/>
</dbReference>
<dbReference type="CD-CODE" id="FB4E32DD">
    <property type="entry name" value="Presynaptic clusters and postsynaptic densities"/>
</dbReference>
<dbReference type="ChiTaRS" id="SEC13">
    <property type="organism name" value="human"/>
</dbReference>
<dbReference type="EvolutionaryTrace" id="P55735"/>
<dbReference type="GeneWiki" id="SEC13"/>
<dbReference type="GenomeRNAi" id="6396"/>
<dbReference type="Pharos" id="P55735">
    <property type="development level" value="Tbio"/>
</dbReference>
<dbReference type="PRO" id="PR:P55735"/>
<dbReference type="Proteomes" id="UP000005640">
    <property type="component" value="Chromosome 3"/>
</dbReference>
<dbReference type="RNAct" id="P55735">
    <property type="molecule type" value="protein"/>
</dbReference>
<dbReference type="Bgee" id="ENSG00000157020">
    <property type="expression patterns" value="Expressed in stromal cell of endometrium and 213 other cell types or tissues"/>
</dbReference>
<dbReference type="ExpressionAtlas" id="P55735">
    <property type="expression patterns" value="baseline and differential"/>
</dbReference>
<dbReference type="GO" id="GO:0030127">
    <property type="term" value="C:COPII vesicle coat"/>
    <property type="evidence" value="ECO:0000314"/>
    <property type="project" value="UniProtKB"/>
</dbReference>
<dbReference type="GO" id="GO:0005829">
    <property type="term" value="C:cytosol"/>
    <property type="evidence" value="ECO:0000304"/>
    <property type="project" value="Reactome"/>
</dbReference>
<dbReference type="GO" id="GO:0005789">
    <property type="term" value="C:endoplasmic reticulum membrane"/>
    <property type="evidence" value="ECO:0000304"/>
    <property type="project" value="Reactome"/>
</dbReference>
<dbReference type="GO" id="GO:0012507">
    <property type="term" value="C:ER to Golgi transport vesicle membrane"/>
    <property type="evidence" value="ECO:0000304"/>
    <property type="project" value="Reactome"/>
</dbReference>
<dbReference type="GO" id="GO:0070062">
    <property type="term" value="C:extracellular exosome"/>
    <property type="evidence" value="ECO:0007005"/>
    <property type="project" value="UniProtKB"/>
</dbReference>
<dbReference type="GO" id="GO:0061700">
    <property type="term" value="C:GATOR2 complex"/>
    <property type="evidence" value="ECO:0000314"/>
    <property type="project" value="UniProtKB"/>
</dbReference>
<dbReference type="GO" id="GO:0043231">
    <property type="term" value="C:intracellular membrane-bounded organelle"/>
    <property type="evidence" value="ECO:0000314"/>
    <property type="project" value="HPA"/>
</dbReference>
<dbReference type="GO" id="GO:0005765">
    <property type="term" value="C:lysosomal membrane"/>
    <property type="evidence" value="ECO:0000314"/>
    <property type="project" value="UniProtKB"/>
</dbReference>
<dbReference type="GO" id="GO:0005635">
    <property type="term" value="C:nuclear envelope"/>
    <property type="evidence" value="ECO:0000314"/>
    <property type="project" value="UniProtKB"/>
</dbReference>
<dbReference type="GO" id="GO:0005643">
    <property type="term" value="C:nuclear pore"/>
    <property type="evidence" value="ECO:0000303"/>
    <property type="project" value="ComplexPortal"/>
</dbReference>
<dbReference type="GO" id="GO:0031080">
    <property type="term" value="C:nuclear pore outer ring"/>
    <property type="evidence" value="ECO:0000314"/>
    <property type="project" value="UniProtKB"/>
</dbReference>
<dbReference type="GO" id="GO:0005654">
    <property type="term" value="C:nucleoplasm"/>
    <property type="evidence" value="ECO:0000314"/>
    <property type="project" value="HPA"/>
</dbReference>
<dbReference type="GO" id="GO:0042802">
    <property type="term" value="F:identical protein binding"/>
    <property type="evidence" value="ECO:0000353"/>
    <property type="project" value="IntAct"/>
</dbReference>
<dbReference type="GO" id="GO:0005198">
    <property type="term" value="F:structural molecule activity"/>
    <property type="evidence" value="ECO:0000318"/>
    <property type="project" value="GO_Central"/>
</dbReference>
<dbReference type="GO" id="GO:0031669">
    <property type="term" value="P:cellular response to nutrient levels"/>
    <property type="evidence" value="ECO:0000314"/>
    <property type="project" value="UniProtKB"/>
</dbReference>
<dbReference type="GO" id="GO:0090114">
    <property type="term" value="P:COPII-coated vesicle budding"/>
    <property type="evidence" value="ECO:0000318"/>
    <property type="project" value="GO_Central"/>
</dbReference>
<dbReference type="GO" id="GO:0090110">
    <property type="term" value="P:COPII-coated vesicle cargo loading"/>
    <property type="evidence" value="ECO:0000314"/>
    <property type="project" value="UniProtKB"/>
</dbReference>
<dbReference type="GO" id="GO:0006886">
    <property type="term" value="P:intracellular protein transport"/>
    <property type="evidence" value="ECO:0000303"/>
    <property type="project" value="UniProtKB"/>
</dbReference>
<dbReference type="GO" id="GO:0051028">
    <property type="term" value="P:mRNA transport"/>
    <property type="evidence" value="ECO:0007669"/>
    <property type="project" value="UniProtKB-KW"/>
</dbReference>
<dbReference type="GO" id="GO:1904262">
    <property type="term" value="P:negative regulation of TORC1 signaling"/>
    <property type="evidence" value="ECO:0000303"/>
    <property type="project" value="ComplexPortal"/>
</dbReference>
<dbReference type="GO" id="GO:0006913">
    <property type="term" value="P:nucleocytoplasmic transport"/>
    <property type="evidence" value="ECO:0000303"/>
    <property type="project" value="ComplexPortal"/>
</dbReference>
<dbReference type="GO" id="GO:0032008">
    <property type="term" value="P:positive regulation of TOR signaling"/>
    <property type="evidence" value="ECO:0000318"/>
    <property type="project" value="GO_Central"/>
</dbReference>
<dbReference type="GO" id="GO:1904263">
    <property type="term" value="P:positive regulation of TORC1 signaling"/>
    <property type="evidence" value="ECO:0000314"/>
    <property type="project" value="UniProtKB"/>
</dbReference>
<dbReference type="GO" id="GO:0032527">
    <property type="term" value="P:protein exit from endoplasmic reticulum"/>
    <property type="evidence" value="ECO:0000318"/>
    <property type="project" value="GO_Central"/>
</dbReference>
<dbReference type="GO" id="GO:0006606">
    <property type="term" value="P:protein import into nucleus"/>
    <property type="evidence" value="ECO:0000318"/>
    <property type="project" value="GO_Central"/>
</dbReference>
<dbReference type="DisProt" id="DP01236"/>
<dbReference type="FunFam" id="2.130.10.10:FF:000017">
    <property type="entry name" value="SEC13 homolog (S. cerevisiae)"/>
    <property type="match status" value="1"/>
</dbReference>
<dbReference type="Gene3D" id="2.130.10.10">
    <property type="entry name" value="YVTN repeat-like/Quinoprotein amine dehydrogenase"/>
    <property type="match status" value="1"/>
</dbReference>
<dbReference type="InterPro" id="IPR037363">
    <property type="entry name" value="Sec13/Seh1_fam"/>
</dbReference>
<dbReference type="InterPro" id="IPR015943">
    <property type="entry name" value="WD40/YVTN_repeat-like_dom_sf"/>
</dbReference>
<dbReference type="InterPro" id="IPR036322">
    <property type="entry name" value="WD40_repeat_dom_sf"/>
</dbReference>
<dbReference type="InterPro" id="IPR001680">
    <property type="entry name" value="WD40_rpt"/>
</dbReference>
<dbReference type="PANTHER" id="PTHR11024">
    <property type="entry name" value="NUCLEAR PORE COMPLEX PROTEIN SEC13 / SEH1 FAMILY MEMBER"/>
    <property type="match status" value="1"/>
</dbReference>
<dbReference type="PANTHER" id="PTHR11024:SF2">
    <property type="entry name" value="PROTEIN SEC13 HOMOLOG"/>
    <property type="match status" value="1"/>
</dbReference>
<dbReference type="Pfam" id="PF00400">
    <property type="entry name" value="WD40"/>
    <property type="match status" value="5"/>
</dbReference>
<dbReference type="SMART" id="SM00320">
    <property type="entry name" value="WD40"/>
    <property type="match status" value="6"/>
</dbReference>
<dbReference type="SUPFAM" id="SSF50978">
    <property type="entry name" value="WD40 repeat-like"/>
    <property type="match status" value="1"/>
</dbReference>
<dbReference type="PROSITE" id="PS50082">
    <property type="entry name" value="WD_REPEATS_2"/>
    <property type="match status" value="3"/>
</dbReference>
<dbReference type="PROSITE" id="PS50294">
    <property type="entry name" value="WD_REPEATS_REGION"/>
    <property type="match status" value="1"/>
</dbReference>
<name>SEC13_HUMAN</name>
<proteinExistence type="evidence at protein level"/>
<evidence type="ECO:0000250" key="1">
    <source>
        <dbReference type="UniProtKB" id="Q9D1M0"/>
    </source>
</evidence>
<evidence type="ECO:0000269" key="2">
    <source>
    </source>
</evidence>
<evidence type="ECO:0000269" key="3">
    <source>
    </source>
</evidence>
<evidence type="ECO:0000269" key="4">
    <source>
    </source>
</evidence>
<evidence type="ECO:0000269" key="5">
    <source>
    </source>
</evidence>
<evidence type="ECO:0000269" key="6">
    <source>
    </source>
</evidence>
<evidence type="ECO:0000269" key="7">
    <source>
    </source>
</evidence>
<evidence type="ECO:0000269" key="8">
    <source>
    </source>
</evidence>
<evidence type="ECO:0000269" key="9">
    <source>
    </source>
</evidence>
<evidence type="ECO:0000269" key="10">
    <source>
    </source>
</evidence>
<evidence type="ECO:0000269" key="11">
    <source>
    </source>
</evidence>
<evidence type="ECO:0000269" key="12">
    <source>
    </source>
</evidence>
<evidence type="ECO:0000269" key="13">
    <source>
    </source>
</evidence>
<evidence type="ECO:0000269" key="14">
    <source>
    </source>
</evidence>
<evidence type="ECO:0000269" key="15">
    <source>
    </source>
</evidence>
<evidence type="ECO:0000269" key="16">
    <source>
    </source>
</evidence>
<evidence type="ECO:0000269" key="17">
    <source>
    </source>
</evidence>
<evidence type="ECO:0000269" key="18">
    <source>
    </source>
</evidence>
<evidence type="ECO:0000269" key="19">
    <source>
    </source>
</evidence>
<evidence type="ECO:0000269" key="20">
    <source ref="7"/>
</evidence>
<evidence type="ECO:0000303" key="21">
    <source>
    </source>
</evidence>
<evidence type="ECO:0000303" key="22">
    <source>
    </source>
</evidence>
<evidence type="ECO:0000303" key="23">
    <source>
    </source>
</evidence>
<evidence type="ECO:0000303" key="24">
    <source>
    </source>
</evidence>
<evidence type="ECO:0000303" key="25">
    <source>
    </source>
</evidence>
<evidence type="ECO:0000305" key="26"/>
<evidence type="ECO:0000312" key="27">
    <source>
        <dbReference type="HGNC" id="HGNC:10697"/>
    </source>
</evidence>
<evidence type="ECO:0007744" key="28">
    <source>
        <dbReference type="PDB" id="7UHY"/>
    </source>
</evidence>
<evidence type="ECO:0007744" key="29">
    <source>
    </source>
</evidence>
<evidence type="ECO:0007744" key="30">
    <source>
    </source>
</evidence>
<evidence type="ECO:0007744" key="31">
    <source>
    </source>
</evidence>
<evidence type="ECO:0007744" key="32">
    <source>
    </source>
</evidence>
<evidence type="ECO:0007829" key="33">
    <source>
        <dbReference type="PDB" id="3BG0"/>
    </source>
</evidence>
<evidence type="ECO:0007829" key="34">
    <source>
        <dbReference type="PDB" id="3BG1"/>
    </source>
</evidence>
<organism>
    <name type="scientific">Homo sapiens</name>
    <name type="common">Human</name>
    <dbReference type="NCBI Taxonomy" id="9606"/>
    <lineage>
        <taxon>Eukaryota</taxon>
        <taxon>Metazoa</taxon>
        <taxon>Chordata</taxon>
        <taxon>Craniata</taxon>
        <taxon>Vertebrata</taxon>
        <taxon>Euteleostomi</taxon>
        <taxon>Mammalia</taxon>
        <taxon>Eutheria</taxon>
        <taxon>Euarchontoglires</taxon>
        <taxon>Primates</taxon>
        <taxon>Haplorrhini</taxon>
        <taxon>Catarrhini</taxon>
        <taxon>Hominidae</taxon>
        <taxon>Homo</taxon>
    </lineage>
</organism>
<comment type="function">
    <text evidence="1 19">Functions as a component of the nuclear pore complex (NPC) and the COPII coat (PubMed:8972206). At the endoplasmic reticulum, SEC13 is involved in the biogenesis of COPII-coated vesicles (PubMed:8972206). Required for the exit of adipsin (CFD/ADN), an adipocyte-secreted protein from the endoplasmic reticulum (By similarity).</text>
</comment>
<comment type="function">
    <text evidence="10 13 14 15 17 18">As a component of the GATOR2 complex, functions as an activator of the amino acid-sensing branch of the mTORC1 signaling pathway (PubMed:23723238, PubMed:25457612, PubMed:27487210, PubMed:35831510, PubMed:36528027). The GATOR2 complex indirectly activates mTORC1 through the inhibition of the GATOR1 subcomplex (PubMed:23723238, PubMed:27487210, PubMed:35831510, PubMed:36528027). GATOR2 probably acts as an E3 ubiquitin-protein ligase toward GATOR1 (PubMed:36528027). In the presence of abundant amino acids, the GATOR2 complex mediates ubiquitination of the NPRL2 core component of the GATOR1 complex, leading to GATOR1 inactivation (PubMed:36528027). In the absence of amino acids, GATOR2 is inhibited, activating the GATOR1 complex (PubMed:25457612, PubMed:26972053, PubMed:27487210). Within the GATOR2 complex, SEC13 and SEH1L are required to stabilize the complex (PubMed:35831510).</text>
</comment>
<comment type="activity regulation">
    <text evidence="13 14 15">The GATOR2 complex is negatively regulated by the upstream amino acid sensors CASTOR1 and SESN2, which sequester the GATOR2 complex in absence of amino acids (PubMed:25457612, PubMed:26972053, PubMed:27487210). In the presence of abundant amino acids, GATOR2 is released from CASTOR1 and SESN2 and activated (PubMed:25457612, PubMed:26972053, PubMed:27487210).</text>
</comment>
<comment type="subunit">
    <text evidence="3 4 5 6 7 8 9 10 11 12 13 14 17 18">At the nuclear pore: component of the Y-shaped Nup107-160 subcomplex of the nuclear pore complex (NPC) (PubMed:14517296, PubMed:18160040, PubMed:35831510, PubMed:36528027). The Nup107-160 subcomplex includes NUP160, NUP133, NUP107, NUP98, NUP85, NUP43, NUP37, SEH1 and SEC13 (PubMed:18160040). At the COPII coat complex: interacts with SEC31A and SEC31B (PubMed:16495487, PubMed:16957052). Interacts with SEC16A (PubMed:17428803, PubMed:19638414, PubMed:25201882). Interacts with SEC16B (PubMed:22355596). Component of the GATOR2 subcomplex, composed of MIOS, SEC13, SEH1L, WDR24 and WDR59 (PubMed:23723238). The GATOR2 complex interacts with CASTOR1 and CASTOR2; the interaction is negatively regulated by arginine (PubMed:26972053). The GATOR2 complex interacts with SESN1, SESN2 and SESN3; the interaction is negatively regulated by amino acids (PubMed:25263562, PubMed:25457612).</text>
</comment>
<comment type="interaction">
    <interactant intactId="EBI-1046596">
        <id>P55735</id>
    </interactant>
    <interactant intactId="EBI-2563158">
        <id>Q8NFH4</id>
        <label>NUP37</label>
    </interactant>
    <organismsDiffer>false</organismsDiffer>
    <experiments>8</experiments>
</comment>
<comment type="interaction">
    <interactant intactId="EBI-1046596">
        <id>P55735</id>
    </interactant>
    <interactant intactId="EBI-1046596">
        <id>P55735</id>
        <label>SEC13</label>
    </interactant>
    <organismsDiffer>false</organismsDiffer>
    <experiments>3</experiments>
</comment>
<comment type="interaction">
    <interactant intactId="EBI-1046596">
        <id>P55735</id>
    </interactant>
    <interactant intactId="EBI-749897">
        <id>Q96JE7</id>
        <label>SEC16B</label>
    </interactant>
    <organismsDiffer>false</organismsDiffer>
    <experiments>3</experiments>
</comment>
<comment type="interaction">
    <interactant intactId="EBI-1046596">
        <id>P55735</id>
    </interactant>
    <interactant intactId="EBI-10215083">
        <id>Q96JE7-2</id>
        <label>SEC16B</label>
    </interactant>
    <organismsDiffer>false</organismsDiffer>
    <experiments>6</experiments>
</comment>
<comment type="interaction">
    <interactant intactId="EBI-1046596">
        <id>P55735</id>
    </interactant>
    <interactant intactId="EBI-1767898">
        <id>O94979</id>
        <label>SEC31A</label>
    </interactant>
    <organismsDiffer>false</organismsDiffer>
    <experiments>7</experiments>
</comment>
<comment type="interaction">
    <interactant intactId="EBI-1046596">
        <id>P55735</id>
    </interactant>
    <interactant intactId="EBI-922818">
        <id>Q96EE3</id>
        <label>SEH1L</label>
    </interactant>
    <organismsDiffer>false</organismsDiffer>
    <experiments>8</experiments>
</comment>
<comment type="interaction">
    <interactant intactId="EBI-1046596">
        <id>P55735</id>
    </interactant>
    <interactant intactId="EBI-523498">
        <id>O00463</id>
        <label>TRAF5</label>
    </interactant>
    <organismsDiffer>false</organismsDiffer>
    <experiments>3</experiments>
</comment>
<comment type="interaction">
    <interactant intactId="EBI-1046596">
        <id>P55735</id>
    </interactant>
    <interactant intactId="EBI-11730">
        <id>P49687</id>
        <label>NUP145</label>
    </interactant>
    <organismsDiffer>true</organismsDiffer>
    <experiments>15</experiments>
</comment>
<comment type="interaction">
    <interactant intactId="EBI-10045850">
        <id>P55735-1</id>
    </interactant>
    <interactant intactId="EBI-15564399">
        <id>O94979-1</id>
        <label>SEC31A</label>
    </interactant>
    <organismsDiffer>false</organismsDiffer>
    <experiments>9</experiments>
</comment>
<comment type="interaction">
    <interactant intactId="EBI-12235008">
        <id>P55735-3</id>
    </interactant>
    <interactant intactId="EBI-7600130">
        <id>Q8IZF2</id>
        <label>ADGRF5</label>
    </interactant>
    <organismsDiffer>false</organismsDiffer>
    <experiments>3</experiments>
</comment>
<comment type="interaction">
    <interactant intactId="EBI-12235008">
        <id>P55735-3</id>
    </interactant>
    <interactant intactId="EBI-742054">
        <id>Q96D03</id>
        <label>DDIT4L</label>
    </interactant>
    <organismsDiffer>false</organismsDiffer>
    <experiments>3</experiments>
</comment>
<comment type="interaction">
    <interactant intactId="EBI-12235008">
        <id>P55735-3</id>
    </interactant>
    <interactant intactId="EBI-11956675">
        <id>Q9GZV7</id>
        <label>HAPLN2</label>
    </interactant>
    <organismsDiffer>false</organismsDiffer>
    <experiments>3</experiments>
</comment>
<comment type="interaction">
    <interactant intactId="EBI-12235008">
        <id>P55735-3</id>
    </interactant>
    <interactant intactId="EBI-466029">
        <id>P42858</id>
        <label>HTT</label>
    </interactant>
    <organismsDiffer>false</organismsDiffer>
    <experiments>15</experiments>
</comment>
<comment type="interaction">
    <interactant intactId="EBI-12235008">
        <id>P55735-3</id>
    </interactant>
    <interactant intactId="EBI-12372595">
        <id>E9PK14</id>
        <label>SEC16B</label>
    </interactant>
    <organismsDiffer>false</organismsDiffer>
    <experiments>6</experiments>
</comment>
<comment type="interaction">
    <interactant intactId="EBI-12235008">
        <id>P55735-3</id>
    </interactant>
    <interactant intactId="EBI-523498">
        <id>O00463</id>
        <label>TRAF5</label>
    </interactant>
    <organismsDiffer>false</organismsDiffer>
    <experiments>3</experiments>
</comment>
<comment type="interaction">
    <interactant intactId="EBI-12235008">
        <id>P55735-3</id>
    </interactant>
    <interactant intactId="EBI-14692289">
        <id>B4DHB6</id>
    </interactant>
    <organismsDiffer>false</organismsDiffer>
    <experiments>3</experiments>
</comment>
<comment type="subcellular location">
    <subcellularLocation>
        <location evidence="19">Cytoplasmic vesicle</location>
        <location evidence="19">COPII-coated vesicle membrane</location>
        <topology evidence="19">Peripheral membrane protein</topology>
        <orientation evidence="19">Cytoplasmic side</orientation>
    </subcellularLocation>
    <subcellularLocation>
        <location evidence="19">Endoplasmic reticulum membrane</location>
        <topology evidence="19">Peripheral membrane protein</topology>
        <orientation evidence="19">Cytoplasmic side</orientation>
    </subcellularLocation>
    <subcellularLocation>
        <location evidence="3 7">Nucleus</location>
        <location evidence="3 7">Nuclear pore complex</location>
    </subcellularLocation>
    <subcellularLocation>
        <location evidence="16">Lysosome membrane</location>
    </subcellularLocation>
    <text evidence="3">In interphase, localizes at both sides of the NPC.</text>
</comment>
<comment type="alternative products">
    <event type="alternative splicing"/>
    <isoform>
        <id>P55735-1</id>
        <name>1</name>
        <sequence type="displayed"/>
    </isoform>
    <isoform>
        <id>P55735-2</id>
        <name>2</name>
        <sequence type="described" ref="VSP_046191"/>
    </isoform>
    <isoform>
        <id>P55735-3</id>
        <name>3</name>
        <sequence type="described" ref="VSP_054695"/>
    </isoform>
    <isoform>
        <id>P55735-4</id>
        <name>4</name>
        <sequence type="described" ref="VSP_058966"/>
    </isoform>
</comment>
<comment type="similarity">
    <text evidence="26">Belongs to the WD repeat SEC13 family.</text>
</comment>
<comment type="caution">
    <text evidence="17 18">The E3 ubiquitin-protein ligase activity of the GATOR2 complex is subject to discussion (PubMed:35831510, PubMed:36528027). According to a report, the GATOR2 complex does not catalyze ubiquitination of the GATOR1 complex (PubMed:35831510). In contrast, another publication showed that the GATOR2 complex mediates ubiquitination of the NPRL2 core component of the GATOR1 complex, leading to GATOR1 inactivation (PubMed:36528027).</text>
</comment>
<protein>
    <recommendedName>
        <fullName evidence="26">Protein SEC13 homolog</fullName>
    </recommendedName>
    <alternativeName>
        <fullName evidence="26">GATOR2 complex protein SEC13</fullName>
    </alternativeName>
    <alternativeName>
        <fullName>SEC13-like protein 1</fullName>
    </alternativeName>
    <alternativeName>
        <fullName>SEC13-related protein</fullName>
    </alternativeName>
</protein>
<reference key="1">
    <citation type="journal article" date="1994" name="Hum. Mol. Genet.">
        <title>Molecular characterization of a novel human gene, SEC13R, related to the yeast secretory pathway gene SEC13, and mapping to a conserved linkage group on human chromosome 3p24-p25 and mouse chromosome 6.</title>
        <authorList>
            <person name="Swaroop A."/>
            <person name="Yang-Feng T.L."/>
            <person name="Liu W."/>
            <person name="Gieser L."/>
            <person name="Barrow L.L."/>
            <person name="Chen K.C."/>
            <person name="Agarwal N."/>
            <person name="Meisler M.H."/>
            <person name="Smith D.I."/>
        </authorList>
    </citation>
    <scope>NUCLEOTIDE SEQUENCE [MRNA] (ISOFORM 1)</scope>
</reference>
<reference key="2">
    <citation type="journal article" date="1997" name="Genome Res.">
        <title>Large-scale concatenation cDNA sequencing.</title>
        <authorList>
            <person name="Yu W."/>
            <person name="Andersson B."/>
            <person name="Worley K.C."/>
            <person name="Muzny D.M."/>
            <person name="Ding Y."/>
            <person name="Liu W."/>
            <person name="Ricafrente J.Y."/>
            <person name="Wentland M.A."/>
            <person name="Lennon G."/>
            <person name="Gibbs R.A."/>
        </authorList>
    </citation>
    <scope>NUCLEOTIDE SEQUENCE [LARGE SCALE MRNA] (ISOFORM 2)</scope>
    <source>
        <tissue>Brain</tissue>
    </source>
</reference>
<reference key="3">
    <citation type="journal article" date="2004" name="Nat. Genet.">
        <title>Complete sequencing and characterization of 21,243 full-length human cDNAs.</title>
        <authorList>
            <person name="Ota T."/>
            <person name="Suzuki Y."/>
            <person name="Nishikawa T."/>
            <person name="Otsuki T."/>
            <person name="Sugiyama T."/>
            <person name="Irie R."/>
            <person name="Wakamatsu A."/>
            <person name="Hayashi K."/>
            <person name="Sato H."/>
            <person name="Nagai K."/>
            <person name="Kimura K."/>
            <person name="Makita H."/>
            <person name="Sekine M."/>
            <person name="Obayashi M."/>
            <person name="Nishi T."/>
            <person name="Shibahara T."/>
            <person name="Tanaka T."/>
            <person name="Ishii S."/>
            <person name="Yamamoto J."/>
            <person name="Saito K."/>
            <person name="Kawai Y."/>
            <person name="Isono Y."/>
            <person name="Nakamura Y."/>
            <person name="Nagahari K."/>
            <person name="Murakami K."/>
            <person name="Yasuda T."/>
            <person name="Iwayanagi T."/>
            <person name="Wagatsuma M."/>
            <person name="Shiratori A."/>
            <person name="Sudo H."/>
            <person name="Hosoiri T."/>
            <person name="Kaku Y."/>
            <person name="Kodaira H."/>
            <person name="Kondo H."/>
            <person name="Sugawara M."/>
            <person name="Takahashi M."/>
            <person name="Kanda K."/>
            <person name="Yokoi T."/>
            <person name="Furuya T."/>
            <person name="Kikkawa E."/>
            <person name="Omura Y."/>
            <person name="Abe K."/>
            <person name="Kamihara K."/>
            <person name="Katsuta N."/>
            <person name="Sato K."/>
            <person name="Tanikawa M."/>
            <person name="Yamazaki M."/>
            <person name="Ninomiya K."/>
            <person name="Ishibashi T."/>
            <person name="Yamashita H."/>
            <person name="Murakawa K."/>
            <person name="Fujimori K."/>
            <person name="Tanai H."/>
            <person name="Kimata M."/>
            <person name="Watanabe M."/>
            <person name="Hiraoka S."/>
            <person name="Chiba Y."/>
            <person name="Ishida S."/>
            <person name="Ono Y."/>
            <person name="Takiguchi S."/>
            <person name="Watanabe S."/>
            <person name="Yosida M."/>
            <person name="Hotuta T."/>
            <person name="Kusano J."/>
            <person name="Kanehori K."/>
            <person name="Takahashi-Fujii A."/>
            <person name="Hara H."/>
            <person name="Tanase T.-O."/>
            <person name="Nomura Y."/>
            <person name="Togiya S."/>
            <person name="Komai F."/>
            <person name="Hara R."/>
            <person name="Takeuchi K."/>
            <person name="Arita M."/>
            <person name="Imose N."/>
            <person name="Musashino K."/>
            <person name="Yuuki H."/>
            <person name="Oshima A."/>
            <person name="Sasaki N."/>
            <person name="Aotsuka S."/>
            <person name="Yoshikawa Y."/>
            <person name="Matsunawa H."/>
            <person name="Ichihara T."/>
            <person name="Shiohata N."/>
            <person name="Sano S."/>
            <person name="Moriya S."/>
            <person name="Momiyama H."/>
            <person name="Satoh N."/>
            <person name="Takami S."/>
            <person name="Terashima Y."/>
            <person name="Suzuki O."/>
            <person name="Nakagawa S."/>
            <person name="Senoh A."/>
            <person name="Mizoguchi H."/>
            <person name="Goto Y."/>
            <person name="Shimizu F."/>
            <person name="Wakebe H."/>
            <person name="Hishigaki H."/>
            <person name="Watanabe T."/>
            <person name="Sugiyama A."/>
            <person name="Takemoto M."/>
            <person name="Kawakami B."/>
            <person name="Yamazaki M."/>
            <person name="Watanabe K."/>
            <person name="Kumagai A."/>
            <person name="Itakura S."/>
            <person name="Fukuzumi Y."/>
            <person name="Fujimori Y."/>
            <person name="Komiyama M."/>
            <person name="Tashiro H."/>
            <person name="Tanigami A."/>
            <person name="Fujiwara T."/>
            <person name="Ono T."/>
            <person name="Yamada K."/>
            <person name="Fujii Y."/>
            <person name="Ozaki K."/>
            <person name="Hirao M."/>
            <person name="Ohmori Y."/>
            <person name="Kawabata A."/>
            <person name="Hikiji T."/>
            <person name="Kobatake N."/>
            <person name="Inagaki H."/>
            <person name="Ikema Y."/>
            <person name="Okamoto S."/>
            <person name="Okitani R."/>
            <person name="Kawakami T."/>
            <person name="Noguchi S."/>
            <person name="Itoh T."/>
            <person name="Shigeta K."/>
            <person name="Senba T."/>
            <person name="Matsumura K."/>
            <person name="Nakajima Y."/>
            <person name="Mizuno T."/>
            <person name="Morinaga M."/>
            <person name="Sasaki M."/>
            <person name="Togashi T."/>
            <person name="Oyama M."/>
            <person name="Hata H."/>
            <person name="Watanabe M."/>
            <person name="Komatsu T."/>
            <person name="Mizushima-Sugano J."/>
            <person name="Satoh T."/>
            <person name="Shirai Y."/>
            <person name="Takahashi Y."/>
            <person name="Nakagawa K."/>
            <person name="Okumura K."/>
            <person name="Nagase T."/>
            <person name="Nomura N."/>
            <person name="Kikuchi H."/>
            <person name="Masuho Y."/>
            <person name="Yamashita R."/>
            <person name="Nakai K."/>
            <person name="Yada T."/>
            <person name="Nakamura Y."/>
            <person name="Ohara O."/>
            <person name="Isogai T."/>
            <person name="Sugano S."/>
        </authorList>
    </citation>
    <scope>NUCLEOTIDE SEQUENCE [LARGE SCALE MRNA] (ISOFORM 3)</scope>
    <source>
        <tissue>Testis</tissue>
    </source>
</reference>
<reference key="4">
    <citation type="journal article" date="2006" name="Nature">
        <title>The DNA sequence, annotation and analysis of human chromosome 3.</title>
        <authorList>
            <person name="Muzny D.M."/>
            <person name="Scherer S.E."/>
            <person name="Kaul R."/>
            <person name="Wang J."/>
            <person name="Yu J."/>
            <person name="Sudbrak R."/>
            <person name="Buhay C.J."/>
            <person name="Chen R."/>
            <person name="Cree A."/>
            <person name="Ding Y."/>
            <person name="Dugan-Rocha S."/>
            <person name="Gill R."/>
            <person name="Gunaratne P."/>
            <person name="Harris R.A."/>
            <person name="Hawes A.C."/>
            <person name="Hernandez J."/>
            <person name="Hodgson A.V."/>
            <person name="Hume J."/>
            <person name="Jackson A."/>
            <person name="Khan Z.M."/>
            <person name="Kovar-Smith C."/>
            <person name="Lewis L.R."/>
            <person name="Lozado R.J."/>
            <person name="Metzker M.L."/>
            <person name="Milosavljevic A."/>
            <person name="Miner G.R."/>
            <person name="Morgan M.B."/>
            <person name="Nazareth L.V."/>
            <person name="Scott G."/>
            <person name="Sodergren E."/>
            <person name="Song X.-Z."/>
            <person name="Steffen D."/>
            <person name="Wei S."/>
            <person name="Wheeler D.A."/>
            <person name="Wright M.W."/>
            <person name="Worley K.C."/>
            <person name="Yuan Y."/>
            <person name="Zhang Z."/>
            <person name="Adams C.Q."/>
            <person name="Ansari-Lari M.A."/>
            <person name="Ayele M."/>
            <person name="Brown M.J."/>
            <person name="Chen G."/>
            <person name="Chen Z."/>
            <person name="Clendenning J."/>
            <person name="Clerc-Blankenburg K.P."/>
            <person name="Chen R."/>
            <person name="Chen Z."/>
            <person name="Davis C."/>
            <person name="Delgado O."/>
            <person name="Dinh H.H."/>
            <person name="Dong W."/>
            <person name="Draper H."/>
            <person name="Ernst S."/>
            <person name="Fu G."/>
            <person name="Gonzalez-Garay M.L."/>
            <person name="Garcia D.K."/>
            <person name="Gillett W."/>
            <person name="Gu J."/>
            <person name="Hao B."/>
            <person name="Haugen E."/>
            <person name="Havlak P."/>
            <person name="He X."/>
            <person name="Hennig S."/>
            <person name="Hu S."/>
            <person name="Huang W."/>
            <person name="Jackson L.R."/>
            <person name="Jacob L.S."/>
            <person name="Kelly S.H."/>
            <person name="Kube M."/>
            <person name="Levy R."/>
            <person name="Li Z."/>
            <person name="Liu B."/>
            <person name="Liu J."/>
            <person name="Liu W."/>
            <person name="Lu J."/>
            <person name="Maheshwari M."/>
            <person name="Nguyen B.-V."/>
            <person name="Okwuonu G.O."/>
            <person name="Palmeiri A."/>
            <person name="Pasternak S."/>
            <person name="Perez L.M."/>
            <person name="Phelps K.A."/>
            <person name="Plopper F.J."/>
            <person name="Qiang B."/>
            <person name="Raymond C."/>
            <person name="Rodriguez R."/>
            <person name="Saenphimmachak C."/>
            <person name="Santibanez J."/>
            <person name="Shen H."/>
            <person name="Shen Y."/>
            <person name="Subramanian S."/>
            <person name="Tabor P.E."/>
            <person name="Verduzco D."/>
            <person name="Waldron L."/>
            <person name="Wang J."/>
            <person name="Wang J."/>
            <person name="Wang Q."/>
            <person name="Williams G.A."/>
            <person name="Wong G.K.-S."/>
            <person name="Yao Z."/>
            <person name="Zhang J."/>
            <person name="Zhang X."/>
            <person name="Zhao G."/>
            <person name="Zhou J."/>
            <person name="Zhou Y."/>
            <person name="Nelson D."/>
            <person name="Lehrach H."/>
            <person name="Reinhardt R."/>
            <person name="Naylor S.L."/>
            <person name="Yang H."/>
            <person name="Olson M."/>
            <person name="Weinstock G."/>
            <person name="Gibbs R.A."/>
        </authorList>
    </citation>
    <scope>NUCLEOTIDE SEQUENCE [LARGE SCALE GENOMIC DNA]</scope>
</reference>
<reference key="5">
    <citation type="journal article" date="2004" name="Genome Res.">
        <title>The status, quality, and expansion of the NIH full-length cDNA project: the Mammalian Gene Collection (MGC).</title>
        <authorList>
            <consortium name="The MGC Project Team"/>
        </authorList>
    </citation>
    <scope>NUCLEOTIDE SEQUENCE [LARGE SCALE MRNA] (ISOFORMS 1 AND 4)</scope>
    <source>
        <tissue>Placenta</tissue>
        <tissue>Uterus</tissue>
    </source>
</reference>
<reference key="6">
    <citation type="journal article" date="2003" name="Nat. Biotechnol.">
        <title>Exploring proteomes and analyzing protein processing by mass spectrometric identification of sorted N-terminal peptides.</title>
        <authorList>
            <person name="Gevaert K."/>
            <person name="Goethals M."/>
            <person name="Martens L."/>
            <person name="Van Damme J."/>
            <person name="Staes A."/>
            <person name="Thomas G.R."/>
            <person name="Vandekerckhove J."/>
        </authorList>
    </citation>
    <scope>PROTEIN SEQUENCE OF 2-27</scope>
    <source>
        <tissue>Platelet</tissue>
    </source>
</reference>
<reference key="7">
    <citation type="submission" date="2009-03" db="UniProtKB">
        <authorList>
            <person name="Bienvenut W.V."/>
            <person name="Waridel P."/>
            <person name="Quadroni M."/>
        </authorList>
    </citation>
    <scope>PROTEIN SEQUENCE OF 2-27; 44-54; 217-256 AND 291-322</scope>
    <scope>CLEAVAGE OF INITIATOR METHIONINE</scope>
    <scope>ACETYLATION AT VAL-2</scope>
    <scope>IDENTIFICATION BY MASS SPECTROMETRY</scope>
    <source>
        <tissue>Embryonic kidney</tissue>
    </source>
</reference>
<reference key="8">
    <citation type="submission" date="2008-12" db="UniProtKB">
        <authorList>
            <person name="Lubec G."/>
            <person name="Chen W.-Q."/>
            <person name="Sun Y."/>
        </authorList>
    </citation>
    <scope>PROTEIN SEQUENCE OF 182-192; 217-239 AND 291-322</scope>
    <scope>IDENTIFICATION BY MASS SPECTROMETRY</scope>
    <source>
        <tissue>Fetal brain cortex</tissue>
    </source>
</reference>
<reference key="9">
    <citation type="journal article" date="1997" name="Mol. Cell. Biol.">
        <title>The mammalian homolog of yeast Sec13p is enriched in the intermediate compartment and is essential for protein transport from the endoplasmic reticulum to the Golgi apparatus.</title>
        <authorList>
            <person name="Tang B.L."/>
            <person name="Peter F."/>
            <person name="Krijnse-Locker J."/>
            <person name="Low S.H."/>
            <person name="Griffiths G."/>
            <person name="Hong W."/>
        </authorList>
    </citation>
    <scope>FUNCTION</scope>
    <scope>SUBCELLULAR LOCATION</scope>
</reference>
<reference key="10">
    <citation type="journal article" date="2003" name="Mol. Cell. Biol.">
        <title>Sec13 shuttles between the nucleus and the cytoplasm and stably interacts with Nup96 at the nuclear pore complex.</title>
        <authorList>
            <person name="Enninga J."/>
            <person name="Levay A."/>
            <person name="Fontoura B.M."/>
        </authorList>
    </citation>
    <scope>SUBCELLULAR LOCATION</scope>
    <scope>INTERACTION WITH NUP96</scope>
</reference>
<reference key="11">
    <citation type="journal article" date="2006" name="J. Cell Sci.">
        <title>Human Sec31B: a family of new mammalian orthologues of yeast Sec31p that associate with the COPII coat.</title>
        <authorList>
            <person name="Stankewich M.C."/>
            <person name="Stabach P.R."/>
            <person name="Morrow J.S."/>
        </authorList>
    </citation>
    <scope>INTERACTION WITH SEC31B</scope>
</reference>
<reference key="12">
    <citation type="journal article" date="2006" name="Mol. Biol. Cell">
        <title>The Ca2+-binding protein ALG-2 is recruited to endoplasmic reticulum exit sites by Sec31A and stabilizes the localization of Sec31A.</title>
        <authorList>
            <person name="Yamasaki A."/>
            <person name="Tani K."/>
            <person name="Yamamoto A."/>
            <person name="Kitamura N."/>
            <person name="Komada M."/>
        </authorList>
    </citation>
    <scope>INTERACTION WITH SEC31A</scope>
</reference>
<reference key="13">
    <citation type="journal article" date="2007" name="J. Biol. Chem.">
        <title>Mammalian Sec16/p250 plays a role in membrane traffic from the endoplasmic reticulum.</title>
        <authorList>
            <person name="Iinuma T."/>
            <person name="Shiga A."/>
            <person name="Nakamoto K."/>
            <person name="O'Brien M.B."/>
            <person name="Aridor M."/>
            <person name="Arimitsu N."/>
            <person name="Tagaya M."/>
            <person name="Tani K."/>
        </authorList>
    </citation>
    <scope>INTERACTION WITH SEC16A</scope>
</reference>
<reference key="14">
    <citation type="journal article" date="2009" name="Anal. Chem.">
        <title>Lys-N and trypsin cover complementary parts of the phosphoproteome in a refined SCX-based approach.</title>
        <authorList>
            <person name="Gauci S."/>
            <person name="Helbig A.O."/>
            <person name="Slijper M."/>
            <person name="Krijgsveld J."/>
            <person name="Heck A.J."/>
            <person name="Mohammed S."/>
        </authorList>
    </citation>
    <scope>ACETYLATION [LARGE SCALE ANALYSIS] AT VAL-2</scope>
    <scope>CLEAVAGE OF INITIATOR METHIONINE [LARGE SCALE ANALYSIS]</scope>
    <scope>IDENTIFICATION BY MASS SPECTROMETRY [LARGE SCALE ANALYSIS]</scope>
</reference>
<reference key="15">
    <citation type="journal article" date="2009" name="J. Cell Sci.">
        <title>Organisation of human ER-exit sites: requirements for the localisation of Sec16 to transitional ER.</title>
        <authorList>
            <person name="Hughes H."/>
            <person name="Budnik A."/>
            <person name="Schmidt K."/>
            <person name="Palmer K.J."/>
            <person name="Mantell J."/>
            <person name="Noakes C."/>
            <person name="Johnson A."/>
            <person name="Carter D.A."/>
            <person name="Verkade P."/>
            <person name="Watson P."/>
            <person name="Stephens D.J."/>
        </authorList>
    </citation>
    <scope>INTERACTION WITH SEC16A</scope>
</reference>
<reference key="16">
    <citation type="journal article" date="2010" name="Sci. Signal.">
        <title>Quantitative phosphoproteomics reveals widespread full phosphorylation site occupancy during mitosis.</title>
        <authorList>
            <person name="Olsen J.V."/>
            <person name="Vermeulen M."/>
            <person name="Santamaria A."/>
            <person name="Kumar C."/>
            <person name="Miller M.L."/>
            <person name="Jensen L.J."/>
            <person name="Gnad F."/>
            <person name="Cox J."/>
            <person name="Jensen T.S."/>
            <person name="Nigg E.A."/>
            <person name="Brunak S."/>
            <person name="Mann M."/>
        </authorList>
    </citation>
    <scope>PHOSPHORYLATION [LARGE SCALE ANALYSIS] AT SER-309</scope>
    <scope>IDENTIFICATION BY MASS SPECTROMETRY [LARGE SCALE ANALYSIS]</scope>
    <source>
        <tissue>Cervix carcinoma</tissue>
    </source>
</reference>
<reference key="17">
    <citation type="journal article" date="2011" name="BMC Syst. Biol.">
        <title>Initial characterization of the human central proteome.</title>
        <authorList>
            <person name="Burkard T.R."/>
            <person name="Planyavsky M."/>
            <person name="Kaupe I."/>
            <person name="Breitwieser F.P."/>
            <person name="Buerckstuemmer T."/>
            <person name="Bennett K.L."/>
            <person name="Superti-Furga G."/>
            <person name="Colinge J."/>
        </authorList>
    </citation>
    <scope>IDENTIFICATION BY MASS SPECTROMETRY [LARGE SCALE ANALYSIS]</scope>
</reference>
<reference key="18">
    <citation type="journal article" date="2011" name="Sci. Rep.">
        <title>Characterization of human Sec16B: indications of specialized, non-redundant functions.</title>
        <authorList>
            <person name="Budnik A."/>
            <person name="Heesom K.J."/>
            <person name="Stephens D.J."/>
        </authorList>
    </citation>
    <scope>INTERACTION WITH SEC16B</scope>
</reference>
<reference key="19">
    <citation type="journal article" date="2012" name="Mol. Cell. Proteomics">
        <title>Comparative large-scale characterisation of plant vs. mammal proteins reveals similar and idiosyncratic N-alpha acetylation features.</title>
        <authorList>
            <person name="Bienvenut W.V."/>
            <person name="Sumpton D."/>
            <person name="Martinez A."/>
            <person name="Lilla S."/>
            <person name="Espagne C."/>
            <person name="Meinnel T."/>
            <person name="Giglione C."/>
        </authorList>
    </citation>
    <scope>ACETYLATION [LARGE SCALE ANALYSIS] AT VAL-2</scope>
    <scope>CLEAVAGE OF INITIATOR METHIONINE [LARGE SCALE ANALYSIS]</scope>
    <scope>IDENTIFICATION BY MASS SPECTROMETRY [LARGE SCALE ANALYSIS]</scope>
</reference>
<reference key="20">
    <citation type="journal article" date="2013" name="J. Proteome Res.">
        <title>Toward a comprehensive characterization of a human cancer cell phosphoproteome.</title>
        <authorList>
            <person name="Zhou H."/>
            <person name="Di Palma S."/>
            <person name="Preisinger C."/>
            <person name="Peng M."/>
            <person name="Polat A.N."/>
            <person name="Heck A.J."/>
            <person name="Mohammed S."/>
        </authorList>
    </citation>
    <scope>PHOSPHORYLATION [LARGE SCALE ANALYSIS] AT SER-184</scope>
    <scope>IDENTIFICATION BY MASS SPECTROMETRY [LARGE SCALE ANALYSIS]</scope>
    <source>
        <tissue>Erythroleukemia</tissue>
    </source>
</reference>
<reference key="21">
    <citation type="journal article" date="2014" name="Cell Rep.">
        <title>The Sestrins interact with GATOR2 to negatively regulate the amino-acid-sensing pathway upstream of mTORC1.</title>
        <authorList>
            <person name="Chantranupong L."/>
            <person name="Wolfson R.L."/>
            <person name="Orozco J.M."/>
            <person name="Saxton R.A."/>
            <person name="Scaria S.M."/>
            <person name="Bar-Peled L."/>
            <person name="Spooner E."/>
            <person name="Isasa M."/>
            <person name="Gygi S.P."/>
            <person name="Sabatini D.M."/>
        </authorList>
    </citation>
    <scope>INTERACTION WITH SESN1; SESN2 AND SESN3</scope>
</reference>
<reference key="22">
    <citation type="journal article" date="2014" name="Cell Rep.">
        <title>Sestrins inhibit mTORC1 kinase activation through the GATOR complex.</title>
        <authorList>
            <person name="Parmigiani A."/>
            <person name="Nourbakhsh A."/>
            <person name="Ding B."/>
            <person name="Wang W."/>
            <person name="Kim Y.C."/>
            <person name="Akopiants K."/>
            <person name="Guan K.L."/>
            <person name="Karin M."/>
            <person name="Budanov A.V."/>
        </authorList>
    </citation>
    <scope>FUNCTION</scope>
    <scope>ACTIVITY REGULATION</scope>
    <scope>INTERACTION WITH SESN2</scope>
</reference>
<reference key="23">
    <citation type="journal article" date="2013" name="Science">
        <title>A Tumor suppressor complex with GAP activity for the Rag GTPases that signal amino acid sufficiency to mTORC1.</title>
        <authorList>
            <person name="Bar-Peled L."/>
            <person name="Chantranupong L."/>
            <person name="Cherniack A.D."/>
            <person name="Chen W.W."/>
            <person name="Ottina K.A."/>
            <person name="Grabiner B.C."/>
            <person name="Spear E.D."/>
            <person name="Carter S.L."/>
            <person name="Meyerson M."/>
            <person name="Sabatini D.M."/>
        </authorList>
    </citation>
    <scope>FUNCTION</scope>
    <scope>IDENTIFICATION IN GATOR COMPLEX</scope>
    <scope>INTERACTION WITH RRAG PROTEINS</scope>
</reference>
<reference key="24">
    <citation type="journal article" date="2014" name="EMBO J.">
        <title>Leucine-rich repeat kinase 2 regulates Sec16A at ER exit sites to allow ER-Golgi export.</title>
        <authorList>
            <person name="Cho H.J."/>
            <person name="Yu J."/>
            <person name="Xie C."/>
            <person name="Rudrabhatla P."/>
            <person name="Chen X."/>
            <person name="Wu J."/>
            <person name="Parisiadou L."/>
            <person name="Liu G."/>
            <person name="Sun L."/>
            <person name="Ma B."/>
            <person name="Ding J."/>
            <person name="Liu Z."/>
            <person name="Cai H."/>
        </authorList>
    </citation>
    <scope>INTERACTION WITH SEC16A</scope>
</reference>
<reference key="25">
    <citation type="journal article" date="2014" name="J. Proteomics">
        <title>An enzyme assisted RP-RPLC approach for in-depth analysis of human liver phosphoproteome.</title>
        <authorList>
            <person name="Bian Y."/>
            <person name="Song C."/>
            <person name="Cheng K."/>
            <person name="Dong M."/>
            <person name="Wang F."/>
            <person name="Huang J."/>
            <person name="Sun D."/>
            <person name="Wang L."/>
            <person name="Ye M."/>
            <person name="Zou H."/>
        </authorList>
    </citation>
    <scope>IDENTIFICATION BY MASS SPECTROMETRY [LARGE SCALE ANALYSIS]</scope>
    <source>
        <tissue>Liver</tissue>
    </source>
</reference>
<reference key="26">
    <citation type="journal article" date="2016" name="Cell">
        <title>The CASTOR proteins are arginine sensors for the mTORC1 pathway.</title>
        <authorList>
            <person name="Chantranupong L."/>
            <person name="Scaria S.M."/>
            <person name="Saxton R.A."/>
            <person name="Gygi M.P."/>
            <person name="Shen K."/>
            <person name="Wyant G.A."/>
            <person name="Wang T."/>
            <person name="Harper J.W."/>
            <person name="Gygi S.P."/>
            <person name="Sabatini D.M."/>
        </authorList>
    </citation>
    <scope>FUNCTION</scope>
    <scope>ACTIVITY REGULATION</scope>
    <scope>INTERACTION WITH CASTOR2 AND CASTOR1</scope>
</reference>
<reference key="27">
    <citation type="journal article" date="2016" name="Nature">
        <title>Mechanism of arginine sensing by CASTOR1 upstream of mTORC1.</title>
        <authorList>
            <person name="Saxton R.A."/>
            <person name="Chantranupong L."/>
            <person name="Knockenhauer K.E."/>
            <person name="Schwartz T.U."/>
            <person name="Sabatini D.M."/>
        </authorList>
    </citation>
    <scope>FUNCTION</scope>
    <scope>ACTIVITY REGULATION</scope>
</reference>
<reference key="28">
    <citation type="journal article" date="2017" name="Nature">
        <title>KICSTOR recruits GATOR1 to the lysosome and is necessary for nutrients to regulate mTORC1.</title>
        <authorList>
            <person name="Wolfson R.L."/>
            <person name="Chantranupong L."/>
            <person name="Wyant G.A."/>
            <person name="Gu X."/>
            <person name="Orozco J.M."/>
            <person name="Shen K."/>
            <person name="Condon K.J."/>
            <person name="Petri S."/>
            <person name="Kedir J."/>
            <person name="Scaria S.M."/>
            <person name="Abu-Remaileh M."/>
            <person name="Frankel W.N."/>
            <person name="Sabatini D.M."/>
        </authorList>
    </citation>
    <scope>SUBCELLULAR LOCATION</scope>
</reference>
<reference key="29">
    <citation type="journal article" date="2023" name="Mol. Cell">
        <title>Ring domains are essential for GATOR2-dependent mTORC1 activation.</title>
        <authorList>
            <person name="Jiang C."/>
            <person name="Dai X."/>
            <person name="He S."/>
            <person name="Zhou H."/>
            <person name="Fang L."/>
            <person name="Guo J."/>
            <person name="Liu S."/>
            <person name="Zhang T."/>
            <person name="Pan W."/>
            <person name="Yu H."/>
            <person name="Fu T."/>
            <person name="Li D."/>
            <person name="Inuzuka H."/>
            <person name="Wang P."/>
            <person name="Xiao J."/>
            <person name="Wei W."/>
        </authorList>
    </citation>
    <scope>FUNCTION</scope>
    <scope>IDENTIFICATION IN GATOR2 COMPLEX</scope>
</reference>
<reference key="30">
    <citation type="journal article" date="2007" name="Cell">
        <title>Architecture of a coat for the nuclear pore membrane.</title>
        <authorList>
            <person name="Hsia K.C."/>
            <person name="Stavropoulos P."/>
            <person name="Blobel G."/>
            <person name="Hoelz A."/>
        </authorList>
    </citation>
    <scope>X-RAY CRYSTALLOGRAPHY (3.0 ANGSTROMS) OF 1-316 IN COMPLEX WITH YEAST NUP145C</scope>
    <scope>SUBUNIT</scope>
    <scope>SUBCELLULAR LOCATION</scope>
</reference>
<reference evidence="28" key="31">
    <citation type="journal article" date="2022" name="Nature">
        <title>Structure of the nutrient-sensing hub GATOR2.</title>
        <authorList>
            <person name="Valenstein M.L."/>
            <person name="Rogala K.B."/>
            <person name="Lalgudi P.V."/>
            <person name="Brignole E.J."/>
            <person name="Gu X."/>
            <person name="Saxton R.A."/>
            <person name="Chantranupong L."/>
            <person name="Kolibius J."/>
            <person name="Quast J.P."/>
            <person name="Sabatini D.M."/>
        </authorList>
    </citation>
    <scope>STRUCTURE BY ELECTRON MICROSCOPY (3.66 ANGSTROMS) IN COMPLEX WITH WDR24; WDR59; MIOS AND SEH1L</scope>
    <scope>FUNCTION</scope>
    <scope>IDENTIFICATION IN GATOR2 COMPLEX</scope>
</reference>
<sequence>MVSVINTVDTSHEDMIHDAQMDYYGTRLATCSSDRSVKIFDVRNGGQILIADLRGHEGPVWQVAWAHPMYGNILASCSYDRKVIIWREENGTWEKSHEHAGHDSSVNSVCWAPHDYGLILACGSSDGAISLLTYTGEGQWEVKKINNAHTIGCNAVSWAPAVVPGSLIDHPSGQKPNYIKRFASGGCDNLIKLWKEEEDGQWKEEQKLEAHSDWVRDVAWAPSIGLPTSTIASCSQDGRVFIWTCDDASSNTWSPKLLHKFNDVVWHVSWSITANILAVSGGDNKVTLWKESVDGQWVCISDVNKGQGSVSASVTEGQQNEQ</sequence>
<accession>P55735</accession>
<accession>A8MV37</accession>
<accession>B4DXJ1</accession>
<accession>Q5BJF0</accession>
<accession>Q9BRM6</accession>
<accession>Q9BUG7</accession>
<gene>
    <name evidence="23 24 27" type="primary">SEC13</name>
    <name type="synonym">D3S1231E</name>
    <name evidence="22" type="synonym">SEC13A</name>
    <name type="synonym">SEC13L1</name>
    <name type="synonym">SEC13R</name>
</gene>
<feature type="initiator methionine" description="Removed" evidence="2 20 29 31">
    <location>
        <position position="1"/>
    </location>
</feature>
<feature type="chain" id="PRO_0000051203" description="Protein SEC13 homolog">
    <location>
        <begin position="2"/>
        <end position="322"/>
    </location>
</feature>
<feature type="repeat" description="WD 1">
    <location>
        <begin position="11"/>
        <end position="50"/>
    </location>
</feature>
<feature type="repeat" description="WD 2">
    <location>
        <begin position="55"/>
        <end position="96"/>
    </location>
</feature>
<feature type="repeat" description="WD 3">
    <location>
        <begin position="101"/>
        <end position="144"/>
    </location>
</feature>
<feature type="repeat" description="WD 4">
    <location>
        <begin position="148"/>
        <end position="204"/>
    </location>
</feature>
<feature type="repeat" description="WD 5">
    <location>
        <begin position="210"/>
        <end position="253"/>
    </location>
</feature>
<feature type="repeat" description="WD 6">
    <location>
        <begin position="260"/>
        <end position="299"/>
    </location>
</feature>
<feature type="modified residue" description="N-acetylvaline" evidence="20 29 31">
    <location>
        <position position="2"/>
    </location>
</feature>
<feature type="modified residue" description="Phosphoserine" evidence="32">
    <location>
        <position position="184"/>
    </location>
</feature>
<feature type="modified residue" description="Phosphoserine" evidence="30">
    <location>
        <position position="309"/>
    </location>
</feature>
<feature type="splice variant" id="VSP_046191" description="In isoform 2." evidence="25">
    <location>
        <begin position="1"/>
        <end position="14"/>
    </location>
</feature>
<feature type="splice variant" id="VSP_054695" description="In isoform 3." evidence="21">
    <original>M</original>
    <variation>MREPVLTWCVPLELLCSHPLPLSAFLKSQVKLYTYRACAGKDEMGKM</variation>
    <location>
        <position position="1"/>
    </location>
</feature>
<feature type="splice variant" id="VSP_058966" description="In isoform 4.">
    <original>M</original>
    <variation>MGKM</variation>
    <location>
        <position position="1"/>
    </location>
</feature>
<feature type="sequence variant" id="VAR_053413" description="In dbSNP:rs34078590.">
    <original>S</original>
    <variation>L</variation>
    <location>
        <position position="172"/>
    </location>
</feature>
<feature type="sequence conflict" description="In Ref. 1; L09260." evidence="26" ref="1">
    <original>A</original>
    <variation>V</variation>
    <location>
        <position position="51"/>
    </location>
</feature>
<feature type="strand" evidence="34">
    <location>
        <begin position="16"/>
        <end position="21"/>
    </location>
</feature>
<feature type="helix" evidence="34">
    <location>
        <begin position="23"/>
        <end position="25"/>
    </location>
</feature>
<feature type="strand" evidence="34">
    <location>
        <begin position="27"/>
        <end position="32"/>
    </location>
</feature>
<feature type="strand" evidence="34">
    <location>
        <begin position="35"/>
        <end position="43"/>
    </location>
</feature>
<feature type="strand" evidence="34">
    <location>
        <begin position="46"/>
        <end position="54"/>
    </location>
</feature>
<feature type="strand" evidence="34">
    <location>
        <begin position="60"/>
        <end position="65"/>
    </location>
</feature>
<feature type="helix" evidence="34">
    <location>
        <begin position="68"/>
        <end position="70"/>
    </location>
</feature>
<feature type="strand" evidence="34">
    <location>
        <begin position="74"/>
        <end position="78"/>
    </location>
</feature>
<feature type="strand" evidence="34">
    <location>
        <begin position="83"/>
        <end position="86"/>
    </location>
</feature>
<feature type="strand" evidence="34">
    <location>
        <begin position="89"/>
        <end position="91"/>
    </location>
</feature>
<feature type="strand" evidence="34">
    <location>
        <begin position="95"/>
        <end position="99"/>
    </location>
</feature>
<feature type="strand" evidence="34">
    <location>
        <begin position="108"/>
        <end position="111"/>
    </location>
</feature>
<feature type="turn" evidence="34">
    <location>
        <begin position="114"/>
        <end position="116"/>
    </location>
</feature>
<feature type="strand" evidence="34">
    <location>
        <begin position="120"/>
        <end position="123"/>
    </location>
</feature>
<feature type="strand" evidence="34">
    <location>
        <begin position="125"/>
        <end position="127"/>
    </location>
</feature>
<feature type="strand" evidence="34">
    <location>
        <begin position="129"/>
        <end position="134"/>
    </location>
</feature>
<feature type="strand" evidence="34">
    <location>
        <begin position="136"/>
        <end position="138"/>
    </location>
</feature>
<feature type="strand" evidence="34">
    <location>
        <begin position="140"/>
        <end position="142"/>
    </location>
</feature>
<feature type="strand" evidence="34">
    <location>
        <begin position="148"/>
        <end position="151"/>
    </location>
</feature>
<feature type="strand" evidence="34">
    <location>
        <begin position="181"/>
        <end position="183"/>
    </location>
</feature>
<feature type="strand" evidence="34">
    <location>
        <begin position="193"/>
        <end position="196"/>
    </location>
</feature>
<feature type="strand" evidence="34">
    <location>
        <begin position="202"/>
        <end position="206"/>
    </location>
</feature>
<feature type="strand" evidence="34">
    <location>
        <begin position="215"/>
        <end position="219"/>
    </location>
</feature>
<feature type="strand" evidence="34">
    <location>
        <begin position="230"/>
        <end position="235"/>
    </location>
</feature>
<feature type="strand" evidence="34">
    <location>
        <begin position="239"/>
        <end position="244"/>
    </location>
</feature>
<feature type="strand" evidence="33">
    <location>
        <begin position="246"/>
        <end position="249"/>
    </location>
</feature>
<feature type="strand" evidence="34">
    <location>
        <begin position="257"/>
        <end position="260"/>
    </location>
</feature>
<feature type="strand" evidence="34">
    <location>
        <begin position="265"/>
        <end position="270"/>
    </location>
</feature>
<feature type="turn" evidence="34">
    <location>
        <begin position="272"/>
        <end position="274"/>
    </location>
</feature>
<feature type="strand" evidence="34">
    <location>
        <begin position="277"/>
        <end position="284"/>
    </location>
</feature>
<feature type="strand" evidence="34">
    <location>
        <begin position="286"/>
        <end position="291"/>
    </location>
</feature>
<feature type="strand" evidence="34">
    <location>
        <begin position="297"/>
        <end position="302"/>
    </location>
</feature>